<proteinExistence type="inferred from homology"/>
<dbReference type="EMBL" id="D90400">
    <property type="protein sequence ID" value="BAA14396.1"/>
    <property type="status" value="ALT_SEQ"/>
    <property type="molecule type" value="Genomic_DNA"/>
</dbReference>
<dbReference type="PIR" id="C36779">
    <property type="entry name" value="W4WL58"/>
</dbReference>
<dbReference type="SMR" id="P26549"/>
<dbReference type="Proteomes" id="UP000007668">
    <property type="component" value="Genome"/>
</dbReference>
<dbReference type="GO" id="GO:0030430">
    <property type="term" value="C:host cell cytoplasm"/>
    <property type="evidence" value="ECO:0007669"/>
    <property type="project" value="UniProtKB-SubCell"/>
</dbReference>
<dbReference type="GO" id="GO:0042025">
    <property type="term" value="C:host cell nucleus"/>
    <property type="evidence" value="ECO:0007669"/>
    <property type="project" value="UniProtKB-SubCell"/>
</dbReference>
<dbReference type="GO" id="GO:0039592">
    <property type="term" value="P:symbiont-mediated arrest of host cell cycle during G2/M transition"/>
    <property type="evidence" value="ECO:0007669"/>
    <property type="project" value="UniProtKB-KW"/>
</dbReference>
<dbReference type="InterPro" id="IPR003861">
    <property type="entry name" value="Papilloma_E4"/>
</dbReference>
<dbReference type="Pfam" id="PF02711">
    <property type="entry name" value="Pap_E4"/>
    <property type="match status" value="1"/>
</dbReference>
<comment type="function">
    <text evidence="1">Contributes to multiple aspects of the viral life cycle including viral genome amplification, suppression of suprabasal cell differentiation and egress of newly formed virions. Induces host cell cycle arrest at the G2 phase by associating with and preventing the nuclear entry of host CDK1/cyclin B1 complexes. Inhibits cellular DNA replication by preventing loading of host replication licensing proteins MCM2 and MCM7 onto chromatin. Within the cytoplasm, associates with host kinase SRPK1, a splicing factor regulator, and inhibits its activity. Therefore, E4 favors expression of late viral transcripts by inhibiting SRPK1-mediated phosphorylation of host serine-arginine (SR) proteins that have critical roles in mRNA metabolism. Late in the infectious cycle, E4 also acts to diminish the integrity of the keratinocyte by disrupting the keratin cytoskeleton and inducing apoptosis through alteration of mitochondrial function to facilitate egress of the newly formed virions.</text>
</comment>
<comment type="subunit">
    <text evidence="1">Assembles into oligomeric complexes. Interacts with host CDK1. Interacts with host SRPK1; this interaction may favor expression of late viral transcripts. Interacts with host cytokeratin components KRT8 and KRT18.</text>
</comment>
<comment type="subcellular location">
    <subcellularLocation>
        <location evidence="1">Host cytoplasm</location>
    </subcellularLocation>
    <subcellularLocation>
        <location evidence="1">Host nucleus</location>
    </subcellularLocation>
</comment>
<comment type="PTM">
    <text evidence="1">Phosphorylated by host ERK. The phosphorylation triggers a structural change that enhances keratin binding and protein stability.</text>
</comment>
<comment type="miscellaneous">
    <text evidence="1">The major E4 form is first synthesized as an E1^E4 fusion protein from spliced E1^E4 transcripts, such that the first few amino acids of the E4 protein are derived from the N terminus of E1.</text>
</comment>
<comment type="similarity">
    <text evidence="3">Belongs to the papillomaviridae E4 protein family.</text>
</comment>
<keyword id="KW-0244">Early protein</keyword>
<keyword id="KW-1035">Host cytoplasm</keyword>
<keyword id="KW-1079">Host G2/M cell cycle arrest by virus</keyword>
<keyword id="KW-1048">Host nucleus</keyword>
<keyword id="KW-0945">Host-virus interaction</keyword>
<keyword id="KW-1121">Modulation of host cell cycle by virus</keyword>
<keyword id="KW-0597">Phosphoprotein</keyword>
<accession>P26549</accession>
<organismHost>
    <name type="scientific">Homo sapiens</name>
    <name type="common">Human</name>
    <dbReference type="NCBI Taxonomy" id="9606"/>
</organismHost>
<gene>
    <name type="primary">E4</name>
</gene>
<reference key="1">
    <citation type="journal article" date="1991" name="Virology">
        <title>Human papillomavirus type 58 DNA sequence.</title>
        <authorList>
            <person name="Kirii Y."/>
            <person name="Iwamoto S."/>
            <person name="Matsukura T."/>
        </authorList>
    </citation>
    <scope>NUCLEOTIDE SEQUENCE [GENOMIC DNA]</scope>
</reference>
<feature type="chain" id="PRO_0000133279" description="Protein E4">
    <location>
        <begin position="1"/>
        <end position="88"/>
    </location>
</feature>
<feature type="region of interest" description="Disordered" evidence="2">
    <location>
        <begin position="14"/>
        <end position="54"/>
    </location>
</feature>
<feature type="compositionally biased region" description="Low complexity" evidence="2">
    <location>
        <begin position="39"/>
        <end position="53"/>
    </location>
</feature>
<organism>
    <name type="scientific">Human papillomavirus 58</name>
    <dbReference type="NCBI Taxonomy" id="10598"/>
    <lineage>
        <taxon>Viruses</taxon>
        <taxon>Monodnaviria</taxon>
        <taxon>Shotokuvirae</taxon>
        <taxon>Cossaviricota</taxon>
        <taxon>Papovaviricetes</taxon>
        <taxon>Zurhausenvirales</taxon>
        <taxon>Papillomaviridae</taxon>
        <taxon>Firstpapillomavirinae</taxon>
        <taxon>Alphapapillomavirus</taxon>
        <taxon>Alphapapillomavirus 9</taxon>
    </lineage>
</organism>
<sequence length="88" mass="9958">MDDPEVIKYPLLKLLTQRPPRPPTTKVHRGQSDDDSIYQTPETTPSTPQSIQTAPWTVDHEEEDYTVQLTVHTKGGTCVVLKFHLSCI</sequence>
<protein>
    <recommendedName>
        <fullName>Protein E4</fullName>
    </recommendedName>
</protein>
<evidence type="ECO:0000250" key="1">
    <source>
        <dbReference type="UniProtKB" id="P06922"/>
    </source>
</evidence>
<evidence type="ECO:0000256" key="2">
    <source>
        <dbReference type="SAM" id="MobiDB-lite"/>
    </source>
</evidence>
<evidence type="ECO:0000305" key="3"/>
<name>VE4_HPV58</name>